<proteinExistence type="evidence at protein level"/>
<reference key="1">
    <citation type="journal article" date="1999" name="DNA Res.">
        <title>Prediction of the coding sequences of unidentified human genes. XIV. The complete sequences of 100 new cDNA clones from brain which code for large proteins in vitro.</title>
        <authorList>
            <person name="Kikuno R."/>
            <person name="Nagase T."/>
            <person name="Ishikawa K."/>
            <person name="Hirosawa M."/>
            <person name="Miyajima N."/>
            <person name="Tanaka A."/>
            <person name="Kotani H."/>
            <person name="Nomura N."/>
            <person name="Ohara O."/>
        </authorList>
    </citation>
    <scope>NUCLEOTIDE SEQUENCE [LARGE SCALE MRNA] (ISOFORM 1)</scope>
    <source>
        <tissue>Brain</tissue>
    </source>
</reference>
<reference key="2">
    <citation type="journal article" date="2007" name="BMC Genomics">
        <title>The full-ORF clone resource of the German cDNA consortium.</title>
        <authorList>
            <person name="Bechtel S."/>
            <person name="Rosenfelder H."/>
            <person name="Duda A."/>
            <person name="Schmidt C.P."/>
            <person name="Ernst U."/>
            <person name="Wellenreuther R."/>
            <person name="Mehrle A."/>
            <person name="Schuster C."/>
            <person name="Bahr A."/>
            <person name="Bloecker H."/>
            <person name="Heubner D."/>
            <person name="Hoerlein A."/>
            <person name="Michel G."/>
            <person name="Wedler H."/>
            <person name="Koehrer K."/>
            <person name="Ottenwaelder B."/>
            <person name="Poustka A."/>
            <person name="Wiemann S."/>
            <person name="Schupp I."/>
        </authorList>
    </citation>
    <scope>NUCLEOTIDE SEQUENCE [LARGE SCALE MRNA] (ISOFORM 1)</scope>
    <source>
        <tissue>Spinal cord</tissue>
    </source>
</reference>
<reference key="3">
    <citation type="journal article" date="2003" name="Nature">
        <title>The DNA sequence and analysis of human chromosome 14.</title>
        <authorList>
            <person name="Heilig R."/>
            <person name="Eckenberg R."/>
            <person name="Petit J.-L."/>
            <person name="Fonknechten N."/>
            <person name="Da Silva C."/>
            <person name="Cattolico L."/>
            <person name="Levy M."/>
            <person name="Barbe V."/>
            <person name="De Berardinis V."/>
            <person name="Ureta-Vidal A."/>
            <person name="Pelletier E."/>
            <person name="Vico V."/>
            <person name="Anthouard V."/>
            <person name="Rowen L."/>
            <person name="Madan A."/>
            <person name="Qin S."/>
            <person name="Sun H."/>
            <person name="Du H."/>
            <person name="Pepin K."/>
            <person name="Artiguenave F."/>
            <person name="Robert C."/>
            <person name="Cruaud C."/>
            <person name="Bruels T."/>
            <person name="Jaillon O."/>
            <person name="Friedlander L."/>
            <person name="Samson G."/>
            <person name="Brottier P."/>
            <person name="Cure S."/>
            <person name="Segurens B."/>
            <person name="Aniere F."/>
            <person name="Samain S."/>
            <person name="Crespeau H."/>
            <person name="Abbasi N."/>
            <person name="Aiach N."/>
            <person name="Boscus D."/>
            <person name="Dickhoff R."/>
            <person name="Dors M."/>
            <person name="Dubois I."/>
            <person name="Friedman C."/>
            <person name="Gouyvenoux M."/>
            <person name="James R."/>
            <person name="Madan A."/>
            <person name="Mairey-Estrada B."/>
            <person name="Mangenot S."/>
            <person name="Martins N."/>
            <person name="Menard M."/>
            <person name="Oztas S."/>
            <person name="Ratcliffe A."/>
            <person name="Shaffer T."/>
            <person name="Trask B."/>
            <person name="Vacherie B."/>
            <person name="Bellemere C."/>
            <person name="Belser C."/>
            <person name="Besnard-Gonnet M."/>
            <person name="Bartol-Mavel D."/>
            <person name="Boutard M."/>
            <person name="Briez-Silla S."/>
            <person name="Combette S."/>
            <person name="Dufosse-Laurent V."/>
            <person name="Ferron C."/>
            <person name="Lechaplais C."/>
            <person name="Louesse C."/>
            <person name="Muselet D."/>
            <person name="Magdelenat G."/>
            <person name="Pateau E."/>
            <person name="Petit E."/>
            <person name="Sirvain-Trukniewicz P."/>
            <person name="Trybou A."/>
            <person name="Vega-Czarny N."/>
            <person name="Bataille E."/>
            <person name="Bluet E."/>
            <person name="Bordelais I."/>
            <person name="Dubois M."/>
            <person name="Dumont C."/>
            <person name="Guerin T."/>
            <person name="Haffray S."/>
            <person name="Hammadi R."/>
            <person name="Muanga J."/>
            <person name="Pellouin V."/>
            <person name="Robert D."/>
            <person name="Wunderle E."/>
            <person name="Gauguet G."/>
            <person name="Roy A."/>
            <person name="Sainte-Marthe L."/>
            <person name="Verdier J."/>
            <person name="Verdier-Discala C."/>
            <person name="Hillier L.W."/>
            <person name="Fulton L."/>
            <person name="McPherson J."/>
            <person name="Matsuda F."/>
            <person name="Wilson R."/>
            <person name="Scarpelli C."/>
            <person name="Gyapay G."/>
            <person name="Wincker P."/>
            <person name="Saurin W."/>
            <person name="Quetier F."/>
            <person name="Waterston R."/>
            <person name="Hood L."/>
            <person name="Weissenbach J."/>
        </authorList>
    </citation>
    <scope>NUCLEOTIDE SEQUENCE [LARGE SCALE GENOMIC DNA]</scope>
</reference>
<reference key="4">
    <citation type="journal article" date="2004" name="Genome Res.">
        <title>The status, quality, and expansion of the NIH full-length cDNA project: the Mammalian Gene Collection (MGC).</title>
        <authorList>
            <consortium name="The MGC Project Team"/>
        </authorList>
    </citation>
    <scope>NUCLEOTIDE SEQUENCE [LARGE SCALE MRNA] (ISOFORMS 1 AND 2)</scope>
    <source>
        <tissue>Brain</tissue>
    </source>
</reference>
<reference key="5">
    <citation type="journal article" date="2004" name="J. Clin. Invest.">
        <title>Vasohibin as an endothelium-derived negative feedback regulator of angiogenesis.</title>
        <authorList>
            <person name="Watanabe K."/>
            <person name="Hasegawa Y."/>
            <person name="Yamashita H."/>
            <person name="Shimizu K."/>
            <person name="Ding Y."/>
            <person name="Abe M."/>
            <person name="Ohta H."/>
            <person name="Imagawa K."/>
            <person name="Hojo K."/>
            <person name="Maki H."/>
            <person name="Sonoda H."/>
            <person name="Sato Y."/>
        </authorList>
    </citation>
    <scope>FUNCTION</scope>
    <scope>SUBCELLULAR LOCATION</scope>
    <scope>TISSUE SPECIFICITY</scope>
    <scope>INDUCTION</scope>
</reference>
<reference key="6">
    <citation type="journal article" date="2005" name="Biochem. Biophys. Res. Commun.">
        <title>Gene regulation of a novel angiogenesis inhibitor, vasohibin, in endothelial cells.</title>
        <authorList>
            <person name="Shimizu K."/>
            <person name="Watanabe K."/>
            <person name="Yamashita H."/>
            <person name="Abe M."/>
            <person name="Yoshimatsu H."/>
            <person name="Ohta H."/>
            <person name="Sonoda H."/>
            <person name="Sato Y."/>
        </authorList>
    </citation>
    <scope>ALTERNATIVE SPLICING</scope>
    <scope>INDUCTION</scope>
</reference>
<reference key="7">
    <citation type="journal article" date="2006" name="Biochem. Biophys. Res. Commun.">
        <title>Multiple processing forms and their biological activities of a novel angiogenesis inhibitor vasohibin.</title>
        <authorList>
            <person name="Sonoda H."/>
            <person name="Ohta H."/>
            <person name="Watanabe K."/>
            <person name="Yamashita H."/>
            <person name="Kimura H."/>
            <person name="Sato Y."/>
        </authorList>
    </citation>
    <scope>FUNCTION</scope>
    <scope>CLEAVAGE SITE</scope>
    <scope>REGION</scope>
    <scope>MUTAGENESIS OF ARG-29 AND ARG-76</scope>
</reference>
<reference key="8">
    <citation type="journal article" date="2006" name="Biochem. Biophys. Res. Commun.">
        <title>Vasohibin prevents arterial neointimal formation through angiogenesis inhibition.</title>
        <authorList>
            <person name="Yamashita H."/>
            <person name="Abe M."/>
            <person name="Watanabe K."/>
            <person name="Shimizu K."/>
            <person name="Moriya T."/>
            <person name="Sato A."/>
            <person name="Satomi S."/>
            <person name="Ohta H."/>
            <person name="Sonoda H."/>
            <person name="Sato Y."/>
        </authorList>
    </citation>
    <scope>FUNCTION</scope>
    <scope>SUBCELLULAR LOCATION</scope>
    <scope>TISSUE SPECIFICITY</scope>
</reference>
<reference key="9">
    <citation type="journal article" date="2009" name="Blood">
        <title>Distinctive localization and opposed roles of vasohibin-1 and vasohibin-2 in the regulation of angiogenesis.</title>
        <authorList>
            <person name="Kimura H."/>
            <person name="Miyashita H."/>
            <person name="Suzuki Y."/>
            <person name="Kobayashi M."/>
            <person name="Watanabe K."/>
            <person name="Sonoda H."/>
            <person name="Ohta H."/>
            <person name="Fujiwara T."/>
            <person name="Shimosegawa T."/>
            <person name="Sato Y."/>
        </authorList>
    </citation>
    <scope>FUNCTION</scope>
</reference>
<reference key="10">
    <citation type="journal article" date="2010" name="J. Cell Sci.">
        <title>Isolation of a small vasohibin-binding protein (SVBP) and its role in vasohibin secretion.</title>
        <authorList>
            <person name="Suzuki Y."/>
            <person name="Kobayashi M."/>
            <person name="Miyashita H."/>
            <person name="Ohta H."/>
            <person name="Sonoda H."/>
            <person name="Sato Y."/>
        </authorList>
    </citation>
    <scope>INTERACTION WITH SVBP</scope>
    <scope>SUBCELLULAR LOCATION</scope>
    <scope>UBIQUITINATION</scope>
</reference>
<reference key="11">
    <citation type="journal article" date="2016" name="Bioinformatics">
        <title>Vasohibins: new transglutaminase-like cysteine proteases possessing a non-canonical Cys-His-Ser catalytic triad.</title>
        <authorList>
            <person name="Sanchez-Pulido L."/>
            <person name="Ponting C.P."/>
        </authorList>
    </citation>
    <scope>IDENTIFICATION AS A PROTEASE</scope>
    <scope>ACTIVE SITES</scope>
</reference>
<reference key="12">
    <citation type="journal article" date="2017" name="Protein Sci.">
        <title>Domain architecture of vasohibins required for their chaperone-dependent unconventional extracellular release.</title>
        <authorList>
            <person name="Kadonosono T."/>
            <person name="Yimchuen W."/>
            <person name="Tsubaki T."/>
            <person name="Shiozawa T."/>
            <person name="Suzuki Y."/>
            <person name="Kuchimaru T."/>
            <person name="Sato Y."/>
            <person name="Kizaka-Kondoh S."/>
        </authorList>
    </citation>
    <scope>SUBCELLULAR LOCATION</scope>
    <scope>INTERACTION WITH SVBP</scope>
</reference>
<reference key="13">
    <citation type="journal article" date="2017" name="Science">
        <title>Vasohibins encode tubulin detyrosinating activity.</title>
        <authorList>
            <person name="Nieuwenhuis J."/>
            <person name="Adamopoulos A."/>
            <person name="Bleijerveld O.B."/>
            <person name="Mazouzi A."/>
            <person name="Stickel E."/>
            <person name="Celie P."/>
            <person name="Altelaar M."/>
            <person name="Knipscheer P."/>
            <person name="Perrakis A."/>
            <person name="Blomen V.A."/>
            <person name="Brummelkamp T.R."/>
        </authorList>
    </citation>
    <scope>FUNCTION</scope>
    <scope>CATALYTIC ACTIVITY</scope>
    <scope>INTERACTION WITH SVBP</scope>
    <scope>ACTIVE SITE</scope>
    <scope>MUTAGENESIS OF CYS-169</scope>
</reference>
<reference key="14">
    <citation type="journal article" date="2019" name="Nat. Struct. Mol. Biol.">
        <title>Structural basis of tubulin detyrosination by the vasohibin-SVBP enzyme complex.</title>
        <authorList>
            <person name="Wang N."/>
            <person name="Bosc C."/>
            <person name="Ryul Choi S."/>
            <person name="Boulan B."/>
            <person name="Peris L."/>
            <person name="Olieric N."/>
            <person name="Bao H."/>
            <person name="Krichen F."/>
            <person name="Chen L."/>
            <person name="Andrieux A."/>
            <person name="Olieric V."/>
            <person name="Moutin M.J."/>
            <person name="Steinmetz M.O."/>
            <person name="Huang H."/>
        </authorList>
    </citation>
    <scope>FUNCTION</scope>
    <scope>MUTAGENESIS OF LYS-145 AND ARG-222</scope>
</reference>
<reference evidence="22 23 24 25 26" key="15">
    <citation type="journal article" date="2019" name="Cell Res.">
        <title>Molecular basis of vasohibins-mediated detyrosination and its impact on spindle function and mitosis.</title>
        <authorList>
            <person name="Liao S."/>
            <person name="Rajendraprasad G."/>
            <person name="Wang N."/>
            <person name="Eibes S."/>
            <person name="Gao J."/>
            <person name="Yu H."/>
            <person name="Wu G."/>
            <person name="Tu X."/>
            <person name="Huang H."/>
            <person name="Barisic M."/>
            <person name="Xu C."/>
        </authorList>
    </citation>
    <scope>X-RAY CRYSTALLOGRAPHY (1.62 ANGSTROMS) OF 57-306 IN COMPLEX WITH SVBP</scope>
    <scope>CATALYTIC ACTIVITY</scope>
    <scope>FUNCTION</scope>
    <scope>MUTAGENESIS OF 74-TRP--TRP-78; TYR-134; LYS-146; 165-LEU-PRO-166; CYS-169; HIS-204; SER-221 AND ARG-222</scope>
    <scope>INTERACTION WITH SVBP</scope>
</reference>
<reference evidence="27" key="16">
    <citation type="journal article" date="2019" name="Nat. Struct. Mol. Biol.">
        <title>Crystal structure of the tubulin tyrosine carboxypeptidase complex VASH1-SVBP.</title>
        <authorList>
            <person name="Adamopoulos A."/>
            <person name="Landskron L."/>
            <person name="Heidebrecht T."/>
            <person name="Tsakou F."/>
            <person name="Bleijerveld O.B."/>
            <person name="Altelaar M."/>
            <person name="Nieuwenhuis J."/>
            <person name="Celie P.H.N."/>
            <person name="Brummelkamp T.R."/>
            <person name="Perrakis A."/>
        </authorList>
    </citation>
    <scope>X-RAY CRYSTALLOGRAPHY (2.10 ANGSTROMS) OF 61-301 IN COMPLEX WITH SVBP</scope>
    <scope>INTERACTION WITH SVBP</scope>
    <scope>FUNCTION</scope>
    <scope>MUTAGENESIS OF TYR-134; LYS-146; LYS-168; CYS-169; LYS-194; ARG-203; HIS-204; SER-221; ARG-222; ARG-223; LEU-226; TYR-247; LYS-258 AND LYS-276</scope>
</reference>
<reference evidence="28 29 30" key="17">
    <citation type="journal article" date="2019" name="Nat. Struct. Mol. Biol.">
        <title>Structural basis of tubulin detyrosination by vasohibins.</title>
        <authorList>
            <person name="Li F."/>
            <person name="Hu Y."/>
            <person name="Qi S."/>
            <person name="Luo X."/>
            <person name="Yu H."/>
        </authorList>
    </citation>
    <scope>X-RAY CRYSTALLOGRAPHY (1.83 ANGSTROMS) OF 58-305 IN COMPLEX WITH SVBP</scope>
    <scope>INTERACTION WITH SVBP</scope>
    <scope>FUNCTION</scope>
    <scope>CATALYTIC ACTIVITY</scope>
    <scope>BIOPHYSICOCHEMICAL PROPERTIES</scope>
    <scope>MUTAGENESIS OF 77-MET--VAL-81; MET-77; VAL-81; TYR-134; PHE-141; LYS-146; LYS-168; CYS-169; LYS-194; ARG-203; HIS-204; SER-221; ARG-222; LYS-256; LYS-258 AND LYS-276</scope>
</reference>
<organism>
    <name type="scientific">Homo sapiens</name>
    <name type="common">Human</name>
    <dbReference type="NCBI Taxonomy" id="9606"/>
    <lineage>
        <taxon>Eukaryota</taxon>
        <taxon>Metazoa</taxon>
        <taxon>Chordata</taxon>
        <taxon>Craniata</taxon>
        <taxon>Vertebrata</taxon>
        <taxon>Euteleostomi</taxon>
        <taxon>Mammalia</taxon>
        <taxon>Eutheria</taxon>
        <taxon>Euarchontoglires</taxon>
        <taxon>Primates</taxon>
        <taxon>Haplorrhini</taxon>
        <taxon>Catarrhini</taxon>
        <taxon>Hominidae</taxon>
        <taxon>Homo</taxon>
    </lineage>
</organism>
<name>VASH1_HUMAN</name>
<evidence type="ECO:0000256" key="1">
    <source>
        <dbReference type="SAM" id="MobiDB-lite"/>
    </source>
</evidence>
<evidence type="ECO:0000269" key="2">
    <source>
    </source>
</evidence>
<evidence type="ECO:0000269" key="3">
    <source>
    </source>
</evidence>
<evidence type="ECO:0000269" key="4">
    <source>
    </source>
</evidence>
<evidence type="ECO:0000269" key="5">
    <source>
    </source>
</evidence>
<evidence type="ECO:0000269" key="6">
    <source>
    </source>
</evidence>
<evidence type="ECO:0000269" key="7">
    <source>
    </source>
</evidence>
<evidence type="ECO:0000269" key="8">
    <source>
    </source>
</evidence>
<evidence type="ECO:0000269" key="9">
    <source>
    </source>
</evidence>
<evidence type="ECO:0000269" key="10">
    <source>
    </source>
</evidence>
<evidence type="ECO:0000269" key="11">
    <source>
    </source>
</evidence>
<evidence type="ECO:0000269" key="12">
    <source>
    </source>
</evidence>
<evidence type="ECO:0000269" key="13">
    <source>
    </source>
</evidence>
<evidence type="ECO:0000303" key="14">
    <source>
    </source>
</evidence>
<evidence type="ECO:0000303" key="15">
    <source>
    </source>
</evidence>
<evidence type="ECO:0000303" key="16">
    <source>
    </source>
</evidence>
<evidence type="ECO:0000303" key="17">
    <source>
    </source>
</evidence>
<evidence type="ECO:0000305" key="18"/>
<evidence type="ECO:0000305" key="19">
    <source>
    </source>
</evidence>
<evidence type="ECO:0000305" key="20">
    <source>
    </source>
</evidence>
<evidence type="ECO:0000312" key="21">
    <source>
        <dbReference type="HGNC" id="HGNC:19964"/>
    </source>
</evidence>
<evidence type="ECO:0007744" key="22">
    <source>
        <dbReference type="PDB" id="6J7B"/>
    </source>
</evidence>
<evidence type="ECO:0007744" key="23">
    <source>
        <dbReference type="PDB" id="6J8F"/>
    </source>
</evidence>
<evidence type="ECO:0007744" key="24">
    <source>
        <dbReference type="PDB" id="6J8N"/>
    </source>
</evidence>
<evidence type="ECO:0007744" key="25">
    <source>
        <dbReference type="PDB" id="6J91"/>
    </source>
</evidence>
<evidence type="ECO:0007744" key="26">
    <source>
        <dbReference type="PDB" id="6J9H"/>
    </source>
</evidence>
<evidence type="ECO:0007744" key="27">
    <source>
        <dbReference type="PDB" id="6NVQ"/>
    </source>
</evidence>
<evidence type="ECO:0007744" key="28">
    <source>
        <dbReference type="PDB" id="6OCF"/>
    </source>
</evidence>
<evidence type="ECO:0007744" key="29">
    <source>
        <dbReference type="PDB" id="6OCG"/>
    </source>
</evidence>
<evidence type="ECO:0007744" key="30">
    <source>
        <dbReference type="PDB" id="6OCH"/>
    </source>
</evidence>
<evidence type="ECO:0007829" key="31">
    <source>
        <dbReference type="PDB" id="6J7B"/>
    </source>
</evidence>
<evidence type="ECO:0007829" key="32">
    <source>
        <dbReference type="PDB" id="6OCF"/>
    </source>
</evidence>
<evidence type="ECO:0007829" key="33">
    <source>
        <dbReference type="PDB" id="6OCG"/>
    </source>
</evidence>
<sequence length="365" mass="40957">MPGGKKVAGGGSSGATPTSAAATAPSGVRRLETSEGTSAQRDEEPEEEGEEDLRDGGVPFFVNRGGLPVDEATWERMWKHVAKIHPDGEKVAQRIRGATDLPKIPIPSVPTFQPSTPVPERLEAVQRYIRELQYNHTGTQFFEIKKSRPLTGLMDLAKEMTKEALPIKCLEAVILGIYLTNSMPTLERFPISFKTYFSGNYFRHIVLGVNFAGRYGALGMSRREDLMYKPPAFRTLSELVLDFEAAYGRCWHVLKKVKLGQSVSHDPHSVEQIEWKHSVLDVERLGRDDFRKELERHARDMRLKIGKGTGPPSPTKDRKKDVSSPQRAQSSPHRRNSRSERRPSGDKKTSEPKAMPDLNGYQIRV</sequence>
<keyword id="KW-0002">3D-structure</keyword>
<keyword id="KW-0025">Alternative splicing</keyword>
<keyword id="KW-0121">Carboxypeptidase</keyword>
<keyword id="KW-0131">Cell cycle</keyword>
<keyword id="KW-0963">Cytoplasm</keyword>
<keyword id="KW-0338">Growth arrest</keyword>
<keyword id="KW-0378">Hydrolase</keyword>
<keyword id="KW-0645">Protease</keyword>
<keyword id="KW-1267">Proteomics identification</keyword>
<keyword id="KW-1185">Reference proteome</keyword>
<keyword id="KW-0964">Secreted</keyword>
<keyword id="KW-0832">Ubl conjugation</keyword>
<gene>
    <name evidence="21" type="primary">VASH1</name>
    <name evidence="14" type="synonym">KIAA1036</name>
    <name type="synonym">VASH</name>
</gene>
<accession>Q7L8A9</accession>
<accession>Q96H02</accession>
<accession>Q9UBF4</accession>
<accession>Q9Y629</accession>
<dbReference type="EC" id="3.4.17.17" evidence="9 10 11"/>
<dbReference type="EMBL" id="AB028959">
    <property type="protein sequence ID" value="BAA82988.2"/>
    <property type="status" value="ALT_INIT"/>
    <property type="molecule type" value="mRNA"/>
</dbReference>
<dbReference type="EMBL" id="AL832588">
    <property type="protein sequence ID" value="CAD89941.1"/>
    <property type="molecule type" value="mRNA"/>
</dbReference>
<dbReference type="EMBL" id="AC007376">
    <property type="protein sequence ID" value="AAF02829.1"/>
    <property type="molecule type" value="Genomic_DNA"/>
</dbReference>
<dbReference type="EMBL" id="AF111169">
    <property type="protein sequence ID" value="AAD44361.1"/>
    <property type="status" value="ALT_SEQ"/>
    <property type="molecule type" value="Genomic_DNA"/>
</dbReference>
<dbReference type="EMBL" id="BC009031">
    <property type="protein sequence ID" value="AAH09031.1"/>
    <property type="molecule type" value="mRNA"/>
</dbReference>
<dbReference type="EMBL" id="BC051896">
    <property type="protein sequence ID" value="AAH51896.1"/>
    <property type="molecule type" value="mRNA"/>
</dbReference>
<dbReference type="CCDS" id="CCDS9851.1">
    <molecule id="Q7L8A9-1"/>
</dbReference>
<dbReference type="RefSeq" id="NP_055724.1">
    <molecule id="Q7L8A9-1"/>
    <property type="nucleotide sequence ID" value="NM_014909.5"/>
</dbReference>
<dbReference type="PDB" id="6J4U">
    <property type="method" value="X-ray"/>
    <property type="resolution" value="2.00 A"/>
    <property type="chains" value="A=57-307"/>
</dbReference>
<dbReference type="PDB" id="6J7B">
    <property type="method" value="X-ray"/>
    <property type="resolution" value="1.62 A"/>
    <property type="chains" value="A=57-306"/>
</dbReference>
<dbReference type="PDB" id="6J8F">
    <property type="method" value="X-ray"/>
    <property type="resolution" value="2.28 A"/>
    <property type="chains" value="B=69-306"/>
</dbReference>
<dbReference type="PDB" id="6J8N">
    <property type="method" value="X-ray"/>
    <property type="resolution" value="1.95 A"/>
    <property type="chains" value="B/D=69-306"/>
</dbReference>
<dbReference type="PDB" id="6J8O">
    <property type="method" value="X-ray"/>
    <property type="resolution" value="1.85 A"/>
    <property type="chains" value="B=69-306"/>
</dbReference>
<dbReference type="PDB" id="6J91">
    <property type="method" value="X-ray"/>
    <property type="resolution" value="3.50 A"/>
    <property type="chains" value="B=69-306"/>
</dbReference>
<dbReference type="PDB" id="6J9H">
    <property type="method" value="X-ray"/>
    <property type="resolution" value="2.31 A"/>
    <property type="chains" value="B/D=69-306"/>
</dbReference>
<dbReference type="PDB" id="6K81">
    <property type="method" value="X-ray"/>
    <property type="resolution" value="2.28 A"/>
    <property type="chains" value="A=1-365"/>
</dbReference>
<dbReference type="PDB" id="6LPG">
    <property type="method" value="X-ray"/>
    <property type="resolution" value="2.30 A"/>
    <property type="chains" value="A=56-310"/>
</dbReference>
<dbReference type="PDB" id="6NVQ">
    <property type="method" value="X-ray"/>
    <property type="resolution" value="2.10 A"/>
    <property type="chains" value="C=1-315"/>
</dbReference>
<dbReference type="PDB" id="6OCF">
    <property type="method" value="X-ray"/>
    <property type="resolution" value="2.10 A"/>
    <property type="chains" value="A=58-305"/>
</dbReference>
<dbReference type="PDB" id="6OCG">
    <property type="method" value="X-ray"/>
    <property type="resolution" value="1.83 A"/>
    <property type="chains" value="A=59-305"/>
</dbReference>
<dbReference type="PDB" id="6OCH">
    <property type="method" value="X-ray"/>
    <property type="resolution" value="2.00 A"/>
    <property type="chains" value="A/C=61-302"/>
</dbReference>
<dbReference type="PDB" id="6WSL">
    <property type="method" value="EM"/>
    <property type="resolution" value="3.10 A"/>
    <property type="chains" value="C/G=52-310"/>
</dbReference>
<dbReference type="PDBsum" id="6J4U"/>
<dbReference type="PDBsum" id="6J7B"/>
<dbReference type="PDBsum" id="6J8F"/>
<dbReference type="PDBsum" id="6J8N"/>
<dbReference type="PDBsum" id="6J8O"/>
<dbReference type="PDBsum" id="6J91"/>
<dbReference type="PDBsum" id="6J9H"/>
<dbReference type="PDBsum" id="6K81"/>
<dbReference type="PDBsum" id="6LPG"/>
<dbReference type="PDBsum" id="6NVQ"/>
<dbReference type="PDBsum" id="6OCF"/>
<dbReference type="PDBsum" id="6OCG"/>
<dbReference type="PDBsum" id="6OCH"/>
<dbReference type="PDBsum" id="6WSL"/>
<dbReference type="EMDB" id="EMD-21893"/>
<dbReference type="SMR" id="Q7L8A9"/>
<dbReference type="BioGRID" id="116518">
    <property type="interactions" value="24"/>
</dbReference>
<dbReference type="FunCoup" id="Q7L8A9">
    <property type="interactions" value="103"/>
</dbReference>
<dbReference type="IntAct" id="Q7L8A9">
    <property type="interactions" value="12"/>
</dbReference>
<dbReference type="MINT" id="Q7L8A9"/>
<dbReference type="STRING" id="9606.ENSP00000167106"/>
<dbReference type="GlyGen" id="Q7L8A9">
    <property type="glycosylation" value="2 sites, 1 O-linked glycan (1 site)"/>
</dbReference>
<dbReference type="iPTMnet" id="Q7L8A9"/>
<dbReference type="PhosphoSitePlus" id="Q7L8A9"/>
<dbReference type="BioMuta" id="VASH1"/>
<dbReference type="DMDM" id="62511163"/>
<dbReference type="MassIVE" id="Q7L8A9"/>
<dbReference type="PaxDb" id="9606-ENSP00000167106"/>
<dbReference type="PeptideAtlas" id="Q7L8A9"/>
<dbReference type="ProteomicsDB" id="68834">
    <molecule id="Q7L8A9-1"/>
</dbReference>
<dbReference type="ProteomicsDB" id="68835">
    <molecule id="Q7L8A9-2"/>
</dbReference>
<dbReference type="Pumba" id="Q7L8A9"/>
<dbReference type="Antibodypedia" id="10">
    <property type="antibodies" value="288 antibodies from 34 providers"/>
</dbReference>
<dbReference type="DNASU" id="22846"/>
<dbReference type="Ensembl" id="ENST00000167106.9">
    <molecule id="Q7L8A9-1"/>
    <property type="protein sequence ID" value="ENSP00000167106.4"/>
    <property type="gene ID" value="ENSG00000071246.11"/>
</dbReference>
<dbReference type="Ensembl" id="ENST00000554237.1">
    <molecule id="Q7L8A9-2"/>
    <property type="protein sequence ID" value="ENSP00000451613.1"/>
    <property type="gene ID" value="ENSG00000071246.11"/>
</dbReference>
<dbReference type="GeneID" id="22846"/>
<dbReference type="KEGG" id="hsa:22846"/>
<dbReference type="MANE-Select" id="ENST00000167106.9">
    <property type="protein sequence ID" value="ENSP00000167106.4"/>
    <property type="RefSeq nucleotide sequence ID" value="NM_014909.5"/>
    <property type="RefSeq protein sequence ID" value="NP_055724.1"/>
</dbReference>
<dbReference type="UCSC" id="uc001xss.4">
    <molecule id="Q7L8A9-1"/>
    <property type="organism name" value="human"/>
</dbReference>
<dbReference type="AGR" id="HGNC:19964"/>
<dbReference type="CTD" id="22846"/>
<dbReference type="DisGeNET" id="22846"/>
<dbReference type="GeneCards" id="VASH1"/>
<dbReference type="HGNC" id="HGNC:19964">
    <property type="gene designation" value="VASH1"/>
</dbReference>
<dbReference type="HPA" id="ENSG00000071246">
    <property type="expression patterns" value="Tissue enhanced (retina)"/>
</dbReference>
<dbReference type="MIM" id="609011">
    <property type="type" value="gene"/>
</dbReference>
<dbReference type="neXtProt" id="NX_Q7L8A9"/>
<dbReference type="OpenTargets" id="ENSG00000071246"/>
<dbReference type="PharmGKB" id="PA134941450"/>
<dbReference type="VEuPathDB" id="HostDB:ENSG00000071246"/>
<dbReference type="eggNOG" id="ENOG502QPPX">
    <property type="taxonomic scope" value="Eukaryota"/>
</dbReference>
<dbReference type="GeneTree" id="ENSGT00390000012703"/>
<dbReference type="HOGENOM" id="CLU_061405_0_1_1"/>
<dbReference type="InParanoid" id="Q7L8A9"/>
<dbReference type="OMA" id="MWRHVAK"/>
<dbReference type="OrthoDB" id="9974232at2759"/>
<dbReference type="PAN-GO" id="Q7L8A9">
    <property type="GO annotations" value="2 GO annotations based on evolutionary models"/>
</dbReference>
<dbReference type="PhylomeDB" id="Q7L8A9"/>
<dbReference type="TreeFam" id="TF329370"/>
<dbReference type="PathwayCommons" id="Q7L8A9"/>
<dbReference type="Reactome" id="R-HSA-8955332">
    <property type="pathway name" value="Carboxyterminal post-translational modifications of tubulin"/>
</dbReference>
<dbReference type="SignaLink" id="Q7L8A9"/>
<dbReference type="BioGRID-ORCS" id="22846">
    <property type="hits" value="9 hits in 1156 CRISPR screens"/>
</dbReference>
<dbReference type="ChiTaRS" id="VASH1">
    <property type="organism name" value="human"/>
</dbReference>
<dbReference type="GeneWiki" id="VASH1"/>
<dbReference type="GenomeRNAi" id="22846"/>
<dbReference type="Pharos" id="Q7L8A9">
    <property type="development level" value="Tbio"/>
</dbReference>
<dbReference type="PRO" id="PR:Q7L8A9"/>
<dbReference type="Proteomes" id="UP000005640">
    <property type="component" value="Chromosome 14"/>
</dbReference>
<dbReference type="RNAct" id="Q7L8A9">
    <property type="molecule type" value="protein"/>
</dbReference>
<dbReference type="Bgee" id="ENSG00000071246">
    <property type="expression patterns" value="Expressed in ganglionic eminence and 115 other cell types or tissues"/>
</dbReference>
<dbReference type="ExpressionAtlas" id="Q7L8A9">
    <property type="expression patterns" value="baseline and differential"/>
</dbReference>
<dbReference type="GO" id="GO:0045177">
    <property type="term" value="C:apical part of cell"/>
    <property type="evidence" value="ECO:0000314"/>
    <property type="project" value="MGI"/>
</dbReference>
<dbReference type="GO" id="GO:0005737">
    <property type="term" value="C:cytoplasm"/>
    <property type="evidence" value="ECO:0000314"/>
    <property type="project" value="MGI"/>
</dbReference>
<dbReference type="GO" id="GO:0005783">
    <property type="term" value="C:endoplasmic reticulum"/>
    <property type="evidence" value="ECO:0000314"/>
    <property type="project" value="UniProtKB"/>
</dbReference>
<dbReference type="GO" id="GO:0005615">
    <property type="term" value="C:extracellular space"/>
    <property type="evidence" value="ECO:0000314"/>
    <property type="project" value="UniProtKB"/>
</dbReference>
<dbReference type="GO" id="GO:0003779">
    <property type="term" value="F:actin binding"/>
    <property type="evidence" value="ECO:0000314"/>
    <property type="project" value="UniProtKB"/>
</dbReference>
<dbReference type="GO" id="GO:0004181">
    <property type="term" value="F:metallocarboxypeptidase activity"/>
    <property type="evidence" value="ECO:0000314"/>
    <property type="project" value="UniProtKB"/>
</dbReference>
<dbReference type="GO" id="GO:0106423">
    <property type="term" value="F:tubulin-tyrosine carboxypeptidase"/>
    <property type="evidence" value="ECO:0007669"/>
    <property type="project" value="UniProtKB-EC"/>
</dbReference>
<dbReference type="GO" id="GO:0001525">
    <property type="term" value="P:angiogenesis"/>
    <property type="evidence" value="ECO:0000314"/>
    <property type="project" value="MGI"/>
</dbReference>
<dbReference type="GO" id="GO:0060716">
    <property type="term" value="P:labyrinthine layer blood vessel development"/>
    <property type="evidence" value="ECO:0007669"/>
    <property type="project" value="Ensembl"/>
</dbReference>
<dbReference type="GO" id="GO:0016525">
    <property type="term" value="P:negative regulation of angiogenesis"/>
    <property type="evidence" value="ECO:0000314"/>
    <property type="project" value="UniProtKB"/>
</dbReference>
<dbReference type="GO" id="GO:0043537">
    <property type="term" value="P:negative regulation of blood vessel endothelial cell migration"/>
    <property type="evidence" value="ECO:0000314"/>
    <property type="project" value="UniProtKB"/>
</dbReference>
<dbReference type="GO" id="GO:0001937">
    <property type="term" value="P:negative regulation of endothelial cell proliferation"/>
    <property type="evidence" value="ECO:0000314"/>
    <property type="project" value="UniProtKB"/>
</dbReference>
<dbReference type="GO" id="GO:1901491">
    <property type="term" value="P:negative regulation of lymphangiogenesis"/>
    <property type="evidence" value="ECO:0000316"/>
    <property type="project" value="MGI"/>
</dbReference>
<dbReference type="GO" id="GO:0006508">
    <property type="term" value="P:proteolysis"/>
    <property type="evidence" value="ECO:0000314"/>
    <property type="project" value="UniProtKB"/>
</dbReference>
<dbReference type="GO" id="GO:0045765">
    <property type="term" value="P:regulation of angiogenesis"/>
    <property type="evidence" value="ECO:0000318"/>
    <property type="project" value="GO_Central"/>
</dbReference>
<dbReference type="GO" id="GO:0051726">
    <property type="term" value="P:regulation of cell cycle"/>
    <property type="evidence" value="ECO:0007669"/>
    <property type="project" value="UniProtKB-KW"/>
</dbReference>
<dbReference type="GO" id="GO:2000772">
    <property type="term" value="P:regulation of cellular senescence"/>
    <property type="evidence" value="ECO:0000315"/>
    <property type="project" value="MGI"/>
</dbReference>
<dbReference type="GO" id="GO:0009611">
    <property type="term" value="P:response to wounding"/>
    <property type="evidence" value="ECO:0000314"/>
    <property type="project" value="MGI"/>
</dbReference>
<dbReference type="InterPro" id="IPR028131">
    <property type="entry name" value="VASH1"/>
</dbReference>
<dbReference type="PANTHER" id="PTHR15750:SF5">
    <property type="entry name" value="TUBULINYL-TYR CARBOXYPEPTIDASE 1"/>
    <property type="match status" value="1"/>
</dbReference>
<dbReference type="PANTHER" id="PTHR15750">
    <property type="entry name" value="VASOHIBIN-1-LIKE ISOFORM X2"/>
    <property type="match status" value="1"/>
</dbReference>
<dbReference type="Pfam" id="PF14822">
    <property type="entry name" value="Vasohibin"/>
    <property type="match status" value="1"/>
</dbReference>
<protein>
    <recommendedName>
        <fullName evidence="18">Tubulinyl-Tyr carboxypeptidase 1</fullName>
        <ecNumber evidence="9 10 11">3.4.17.17</ecNumber>
    </recommendedName>
    <alternativeName>
        <fullName evidence="17">Tubulin carboxypeptidase 1</fullName>
    </alternativeName>
    <alternativeName>
        <fullName evidence="18">Tyrosine carboxypeptidase 1</fullName>
        <shortName evidence="18">TTCP 1</shortName>
    </alternativeName>
    <alternativeName>
        <fullName evidence="15">Vasohibin-1</fullName>
    </alternativeName>
</protein>
<comment type="function">
    <text evidence="2 4 5 6 9 10 11 12 13">Tyrosine carboxypeptidase that removes the C-terminal tyrosine residue of alpha-tubulin, thereby regulating microtubule dynamics and function (PubMed:29146869, PubMed:31171830, PubMed:31235910, PubMed:31235911, PubMed:31270470). Critical for spindle function and accurate chromosome segregation during mitosis since microtubule detyronisation regulates mitotic spindle length and postioning (PubMed:31171830). Acts as an angiogenesis inhibitor: inhibits migration, proliferation and network formation by endothelial cells as well as angiogenesis (PubMed:15467828, PubMed:16488400, PubMed:16707096, PubMed:19204325). This inhibitory effect is selective to endothelial cells as it does not affect the migration of smooth muscle cells or fibroblasts (PubMed:15467828, PubMed:16488400, PubMed:16707096).</text>
</comment>
<comment type="catalytic activity">
    <reaction evidence="9 10 11">
        <text>C-terminal L-alpha-aminoacyl-L-glutamyl-L-glutamyl-L-tyrosyl-[tubulin] + H2O = C-terminal L-alpha-aminoacyl-L-glutamyl-L-glutamyl-[tubulin] + L-tyrosine</text>
        <dbReference type="Rhea" id="RHEA:57444"/>
        <dbReference type="Rhea" id="RHEA-COMP:16434"/>
        <dbReference type="Rhea" id="RHEA-COMP:16435"/>
        <dbReference type="ChEBI" id="CHEBI:15377"/>
        <dbReference type="ChEBI" id="CHEBI:58315"/>
        <dbReference type="ChEBI" id="CHEBI:149554"/>
        <dbReference type="ChEBI" id="CHEBI:149555"/>
        <dbReference type="EC" id="3.4.17.17"/>
    </reaction>
</comment>
<comment type="biophysicochemical properties">
    <kinetics>
        <KM evidence="11">7.9 uM for alpha-tubulin C-terminal tail</KM>
        <text evidence="11">kcat is 44.5 min(-1) for alpha-tubulin C-terminal tail.</text>
    </kinetics>
</comment>
<comment type="subunit">
    <text evidence="7 8 9 10 11 13">Interacts with SVBP; interaction enhances VASH1 tyrosine carboxypeptidase activity.</text>
</comment>
<comment type="interaction">
    <interactant intactId="EBI-10256546">
        <id>Q7L8A9</id>
    </interactant>
    <interactant intactId="EBI-741925">
        <id>P49366</id>
        <label>DHPS</label>
    </interactant>
    <organismsDiffer>false</organismsDiffer>
    <experiments>3</experiments>
</comment>
<comment type="interaction">
    <interactant intactId="EBI-21497569">
        <id>Q7L8A9-1</id>
    </interactant>
    <interactant intactId="EBI-21497577">
        <id>Q8N300</id>
        <label>SVBP</label>
    </interactant>
    <organismsDiffer>false</organismsDiffer>
    <experiments>2</experiments>
</comment>
<comment type="subcellular location">
    <subcellularLocation>
        <location evidence="2 8">Cytoplasm</location>
    </subcellularLocation>
    <subcellularLocation>
        <location evidence="2 5 7 8">Secreted</location>
    </subcellularLocation>
    <text evidence="8">Mainly localizes in the cytoplasm (PubMed:27879017). Some fraction is secreted via a non-canonical secretion system; interaction with SVBP promotes secretion (PubMed:27879017).</text>
</comment>
<comment type="alternative products">
    <event type="alternative splicing"/>
    <isoform>
        <id>Q7L8A9-1</id>
        <name>1</name>
        <sequence type="displayed"/>
    </isoform>
    <isoform>
        <id>Q7L8A9-2</id>
        <name>2</name>
        <sequence type="described" ref="VSP_013324 VSP_013325"/>
    </isoform>
</comment>
<comment type="tissue specificity">
    <text evidence="2 5">Preferentially expressed in endothelial cells (PubMed:15467828, PubMed:16707096). Highly expressed in fetal organs (PubMed:15467828). Expressed in brain and placenta, and at lower level in heart and kidney (PubMed:15467828). Highly detected in microvessels endothelial cells of atherosclerotic lesions (PubMed:16707096).</text>
</comment>
<comment type="induction">
    <text evidence="2 3">By VEGF.</text>
</comment>
<comment type="PTM">
    <text evidence="4">2 major forms (42 and 36 kDa) and 2 minors (32 and 27 kDa) may be processed by proteolytic cleavage (PubMed:16488400). The largest form (42 kDa) seems to be secreted and the other major form (63 kDa) seems to accumulate within the cells or pericellular milieu (PubMed:16488400). Polypeptide consisting of Met-77 to Arg-318 may correspond to the 27 kDa form and that consisting of Met-77 to Val-365 may correspond to the 36 kDa form (PubMed:16488400).</text>
</comment>
<comment type="PTM">
    <text evidence="7">Ubiquitinated in vitro.</text>
</comment>
<comment type="similarity">
    <text evidence="18">Belongs to the transglutaminase-like superfamily. Vasohibin family.</text>
</comment>
<comment type="sequence caution" evidence="18">
    <conflict type="erroneous gene model prediction">
        <sequence resource="EMBL-CDS" id="AAD44361"/>
    </conflict>
</comment>
<comment type="sequence caution" evidence="18">
    <conflict type="erroneous initiation">
        <sequence resource="EMBL-CDS" id="BAA82988"/>
    </conflict>
    <text>Extended N-terminus.</text>
</comment>
<feature type="chain" id="PRO_0000189980" description="Tubulinyl-Tyr carboxypeptidase 1">
    <location>
        <begin position="1"/>
        <end position="365"/>
    </location>
</feature>
<feature type="region of interest" description="Disordered" evidence="1">
    <location>
        <begin position="1"/>
        <end position="59"/>
    </location>
</feature>
<feature type="region of interest" description="Disordered" evidence="1">
    <location>
        <begin position="299"/>
        <end position="365"/>
    </location>
</feature>
<feature type="region of interest" description="Involved in heparin-binding and antiangiogenic activity" evidence="4">
    <location>
        <begin position="319"/>
        <end position="365"/>
    </location>
</feature>
<feature type="compositionally biased region" description="Gly residues" evidence="1">
    <location>
        <begin position="1"/>
        <end position="13"/>
    </location>
</feature>
<feature type="compositionally biased region" description="Low complexity" evidence="1">
    <location>
        <begin position="14"/>
        <end position="27"/>
    </location>
</feature>
<feature type="compositionally biased region" description="Acidic residues" evidence="1">
    <location>
        <begin position="43"/>
        <end position="53"/>
    </location>
</feature>
<feature type="compositionally biased region" description="Basic and acidic residues" evidence="1">
    <location>
        <begin position="337"/>
        <end position="351"/>
    </location>
</feature>
<feature type="active site" evidence="9 20">
    <location>
        <position position="169"/>
    </location>
</feature>
<feature type="active site" evidence="20">
    <location>
        <position position="204"/>
    </location>
</feature>
<feature type="active site" evidence="20">
    <location>
        <position position="221"/>
    </location>
</feature>
<feature type="site" description="Cleavage" evidence="19">
    <location>
        <begin position="29"/>
        <end position="30"/>
    </location>
</feature>
<feature type="site" description="Cleavage" evidence="19">
    <location>
        <begin position="76"/>
        <end position="77"/>
    </location>
</feature>
<feature type="splice variant" id="VSP_013324" description="In isoform 2." evidence="16">
    <original>IYLTNSMPTLERFPISFKTYFSGNYFRH</original>
    <variation>MYPSSPEGEGSGLLWASASCSESEGGVG</variation>
    <location>
        <begin position="177"/>
        <end position="204"/>
    </location>
</feature>
<feature type="splice variant" id="VSP_013325" description="In isoform 2." evidence="16">
    <location>
        <begin position="205"/>
        <end position="365"/>
    </location>
</feature>
<feature type="mutagenesis site" description="Disappearance of 42 kDa processed form." evidence="4">
    <original>R</original>
    <variation>A</variation>
    <location>
        <position position="29"/>
    </location>
</feature>
<feature type="mutagenesis site" description="Strongly reduced interaction with SVBP." evidence="10">
    <original>WERMW</original>
    <variation>AERMA</variation>
    <location>
        <begin position="74"/>
        <end position="78"/>
    </location>
</feature>
<feature type="mutagenesis site" description="Disappearance of 36, 32 and 27 kDa processed forms." evidence="4">
    <original>R</original>
    <variation>A</variation>
    <location>
        <position position="76"/>
    </location>
</feature>
<feature type="mutagenesis site" description="No effect on tyrosine carboxypeptidase activity on alpha-tubulin." evidence="11">
    <original>MWKHV</original>
    <variation>RWKHR</variation>
    <location>
        <begin position="77"/>
        <end position="81"/>
    </location>
</feature>
<feature type="mutagenesis site" description="No effect on tyrosine carboxypeptidase activity on alpha-tubulin. Reduced tyrosine carboxypeptidase activity on alpha-tubulin; when associated with R-141. Abolished tyrosine carboxypeptidase activity on alpha-tubulin; when associated with R-81 and R-141." evidence="11">
    <original>M</original>
    <variation>R</variation>
    <location>
        <position position="77"/>
    </location>
</feature>
<feature type="mutagenesis site" description="No effect on tyrosine carboxypeptidase activity on alpha-tubulin. Reduced tyrosine carboxypeptidase activity on alpha-tubulin; when associated with R-141. Abolished tyrosine carboxypeptidase activity on alpha-tubulin; when associated with R-77 and R-141." evidence="11">
    <original>V</original>
    <variation>R</variation>
    <location>
        <position position="81"/>
    </location>
</feature>
<feature type="mutagenesis site" description="Abolished tyrosine carboxypeptidase activity on alpha-tubulin." evidence="10 11 13">
    <original>Y</original>
    <variation>A</variation>
    <variation>F</variation>
    <location>
        <position position="134"/>
    </location>
</feature>
<feature type="mutagenesis site" description="No effect on tyrosine carboxypeptidase activity on alpha-tubulin. Reduced tyrosine carboxypeptidase activity on alpha-tubulin; when associated with R-77. Reduced tyrosine carboxypeptidase activity on alpha-tubulin; when associated with R-81. Abolished tyrosine carboxypeptidase activity on alpha-tubulin; when associated with R-77 and R-81." evidence="11">
    <original>F</original>
    <variation>R</variation>
    <location>
        <position position="141"/>
    </location>
</feature>
<feature type="mutagenesis site" description="Reduced tyrosine carboxypeptidase activity on alpha-tubulin." evidence="12">
    <original>K</original>
    <variation>A</variation>
    <variation>E</variation>
    <location>
        <position position="145"/>
    </location>
</feature>
<feature type="mutagenesis site" description="Abolished tyrosine carboxypeptidase activity on alpha-tubulin. Abolished tyrosine carboxypeptidase activity on alpha-tubulin; when associated with A-222." evidence="10 11 13">
    <original>K</original>
    <variation>A</variation>
    <variation>E</variation>
    <location>
        <position position="146"/>
    </location>
</feature>
<feature type="mutagenesis site" description="Almost abolished interaction with VASH1." evidence="10">
    <original>LP</original>
    <variation>EE</variation>
    <location>
        <begin position="165"/>
        <end position="166"/>
    </location>
</feature>
<feature type="mutagenesis site" description="Abolished tyrosine carboxypeptidase activity on alpha-tubulin." evidence="11 13">
    <original>K</original>
    <variation>E</variation>
    <location>
        <position position="168"/>
    </location>
</feature>
<feature type="mutagenesis site" description="Abolished tyrosine carboxypeptidase activity on alpha-tubulin." evidence="9 10 11 13">
    <original>C</original>
    <variation>A</variation>
    <variation>S</variation>
    <location>
        <position position="169"/>
    </location>
</feature>
<feature type="mutagenesis site" description="No effect on tyrosine carboxypeptidase activity on alpha-tubulin. No effect on tyrosine carboxypeptidase activity on alpha-tubulin; when associated with E-256. No effect on tyrosine carboxypeptidase activity on alpha-tubulin; when associated with E-258. No effect on tyrosine carboxypeptidase activity on alpha-tubulin; when associated with E-276." evidence="11 13">
    <original>K</original>
    <variation>E</variation>
    <location>
        <position position="194"/>
    </location>
</feature>
<feature type="mutagenesis site" description="No effect on tyrosine carboxypeptidase activity on alpha-tubulin. Strongly reduced tyrosine carboxypeptidase activity on alpha-tubulin; when associated with E-258. Reduced tyrosine carboxypeptidase activity on alpha-tubulin; when associated with E-258. Reduced tyrosine carboxypeptidase activity on alpha-tubulin; when associated with E-256. Reduced tyrosine carboxypeptidase activity on alpha-tubulin; when associated with E-276." evidence="11 13">
    <original>R</original>
    <variation>E</variation>
    <location>
        <position position="203"/>
    </location>
</feature>
<feature type="mutagenesis site" description="Abolished tyrosine carboxypeptidase activity on alpha-tubulin." evidence="10 11 13">
    <original>H</original>
    <variation>A</variation>
    <location>
        <position position="204"/>
    </location>
</feature>
<feature type="mutagenesis site" description="Abolished tyrosine carboxypeptidase activity on alpha-tubulin." evidence="10 11 13">
    <original>S</original>
    <variation>A</variation>
    <location>
        <position position="221"/>
    </location>
</feature>
<feature type="mutagenesis site" description="Abolished tyrosine carboxypeptidase activity on alpha-tubulin. Abolished tyrosine carboxypeptidase activity on alpha-tubulin; when associated with A-146." evidence="10 11 12 13">
    <original>R</original>
    <variation>A</variation>
    <variation>E</variation>
    <location>
        <position position="222"/>
    </location>
</feature>
<feature type="mutagenesis site" description="Reduced tyrosine carboxypeptidase activity on alpha-tubulin." evidence="12">
    <original>R</original>
    <variation>Q</variation>
    <location>
        <position position="222"/>
    </location>
</feature>
<feature type="mutagenesis site" description="Slightly reduced tyrosine carboxypeptidase activity on alpha-tubulin." evidence="13">
    <original>R</original>
    <variation>E</variation>
    <location>
        <position position="223"/>
    </location>
</feature>
<feature type="mutagenesis site" description="Slightly reduced tyrosine carboxypeptidase activity on alpha-tubulin." evidence="13">
    <original>L</original>
    <variation>A</variation>
    <location>
        <position position="226"/>
    </location>
</feature>
<feature type="mutagenesis site" description="Slightly reduced tyrosine carboxypeptidase activity on alpha-tubulin." evidence="13">
    <original>Y</original>
    <variation>F</variation>
    <location>
        <position position="247"/>
    </location>
</feature>
<feature type="mutagenesis site" description="No effect on tyrosine carboxypeptidase activity on alpha-tubulin; when associated with E-194. Reduced tyrosine carboxypeptidase activity on alpha-tubulin; when associated with E-203." evidence="11">
    <original>K</original>
    <variation>E</variation>
    <location>
        <position position="256"/>
    </location>
</feature>
<feature type="mutagenesis site" description="No effect on tyrosine carboxypeptidase activity on alpha-tubulin. No effect on tyrosine carboxypeptidase activity on alpha-tubulin; when associated with E-194. Strognly reduced tyrosine carboxypeptidase activity on alpha-tubulin; when associated with E-203." evidence="11 13">
    <original>K</original>
    <variation>E</variation>
    <location>
        <position position="258"/>
    </location>
</feature>
<feature type="mutagenesis site" description="No effect on tyrosine carboxypeptidase activity on alpha-tubulin. No effect on tyrosine carboxypeptidase activity on alpha-tubulin; when associated with E-194. Reduced tyrosine carboxypeptidase activity on alpha-tubulin; when associated with E-203." evidence="11 13">
    <original>K</original>
    <variation>E</variation>
    <location>
        <position position="276"/>
    </location>
</feature>
<feature type="strand" evidence="32">
    <location>
        <begin position="63"/>
        <end position="68"/>
    </location>
</feature>
<feature type="helix" evidence="31">
    <location>
        <begin position="71"/>
        <end position="84"/>
    </location>
</feature>
<feature type="strand" evidence="33">
    <location>
        <begin position="85"/>
        <end position="87"/>
    </location>
</feature>
<feature type="helix" evidence="31">
    <location>
        <begin position="88"/>
        <end position="95"/>
    </location>
</feature>
<feature type="helix" evidence="31">
    <location>
        <begin position="118"/>
        <end position="132"/>
    </location>
</feature>
<feature type="strand" evidence="31">
    <location>
        <begin position="137"/>
        <end position="142"/>
    </location>
</feature>
<feature type="strand" evidence="32">
    <location>
        <begin position="146"/>
        <end position="149"/>
    </location>
</feature>
<feature type="helix" evidence="31">
    <location>
        <begin position="150"/>
        <end position="163"/>
    </location>
</feature>
<feature type="helix" evidence="31">
    <location>
        <begin position="169"/>
        <end position="178"/>
    </location>
</feature>
<feature type="turn" evidence="31">
    <location>
        <begin position="179"/>
        <end position="182"/>
    </location>
</feature>
<feature type="strand" evidence="31">
    <location>
        <begin position="186"/>
        <end position="197"/>
    </location>
</feature>
<feature type="strand" evidence="31">
    <location>
        <begin position="200"/>
        <end position="211"/>
    </location>
</feature>
<feature type="strand" evidence="31">
    <location>
        <begin position="214"/>
        <end position="218"/>
    </location>
</feature>
<feature type="helix" evidence="31">
    <location>
        <begin position="224"/>
        <end position="226"/>
    </location>
</feature>
<feature type="strand" evidence="31">
    <location>
        <begin position="229"/>
        <end position="235"/>
    </location>
</feature>
<feature type="helix" evidence="31">
    <location>
        <begin position="236"/>
        <end position="249"/>
    </location>
</feature>
<feature type="strand" evidence="31">
    <location>
        <begin position="253"/>
        <end position="259"/>
    </location>
</feature>
<feature type="strand" evidence="31">
    <location>
        <begin position="277"/>
        <end position="281"/>
    </location>
</feature>
<feature type="helix" evidence="31">
    <location>
        <begin position="282"/>
        <end position="303"/>
    </location>
</feature>